<protein>
    <recommendedName>
        <fullName evidence="2">All-trans-retinol dehydrogenase [NAD(+)] ADH1B</fullName>
        <ecNumber evidence="2">1.1.1.105</ecNumber>
    </recommendedName>
    <alternativeName>
        <fullName evidence="2">Alcohol dehydrogenase 1B</fullName>
    </alternativeName>
    <alternativeName>
        <fullName>Alcohol dehydrogenase subunit beta</fullName>
    </alternativeName>
</protein>
<feature type="initiator methionine" description="Removed" evidence="2">
    <location>
        <position position="1"/>
    </location>
</feature>
<feature type="chain" id="PRO_0000160663" description="All-trans-retinol dehydrogenase [NAD(+)] ADH1B">
    <location>
        <begin position="2"/>
        <end position="375"/>
    </location>
</feature>
<feature type="binding site">
    <location>
        <position position="47"/>
    </location>
    <ligand>
        <name>Zn(2+)</name>
        <dbReference type="ChEBI" id="CHEBI:29105"/>
        <label>1</label>
        <note>catalytic</note>
    </ligand>
</feature>
<feature type="binding site">
    <location>
        <position position="68"/>
    </location>
    <ligand>
        <name>Zn(2+)</name>
        <dbReference type="ChEBI" id="CHEBI:29105"/>
        <label>1</label>
        <note>catalytic</note>
    </ligand>
</feature>
<feature type="binding site">
    <location>
        <position position="98"/>
    </location>
    <ligand>
        <name>Zn(2+)</name>
        <dbReference type="ChEBI" id="CHEBI:29105"/>
        <label>2</label>
    </ligand>
</feature>
<feature type="binding site">
    <location>
        <position position="101"/>
    </location>
    <ligand>
        <name>Zn(2+)</name>
        <dbReference type="ChEBI" id="CHEBI:29105"/>
        <label>2</label>
    </ligand>
</feature>
<feature type="binding site">
    <location>
        <position position="104"/>
    </location>
    <ligand>
        <name>Zn(2+)</name>
        <dbReference type="ChEBI" id="CHEBI:29105"/>
        <label>2</label>
    </ligand>
</feature>
<feature type="binding site">
    <location>
        <position position="112"/>
    </location>
    <ligand>
        <name>Zn(2+)</name>
        <dbReference type="ChEBI" id="CHEBI:29105"/>
        <label>2</label>
    </ligand>
</feature>
<feature type="binding site">
    <location>
        <position position="175"/>
    </location>
    <ligand>
        <name>Zn(2+)</name>
        <dbReference type="ChEBI" id="CHEBI:29105"/>
        <label>1</label>
        <note>catalytic</note>
    </ligand>
</feature>
<feature type="binding site" evidence="1">
    <location>
        <begin position="200"/>
        <end position="205"/>
    </location>
    <ligand>
        <name>NAD(+)</name>
        <dbReference type="ChEBI" id="CHEBI:57540"/>
    </ligand>
</feature>
<feature type="binding site" evidence="1">
    <location>
        <position position="224"/>
    </location>
    <ligand>
        <name>NAD(+)</name>
        <dbReference type="ChEBI" id="CHEBI:57540"/>
    </ligand>
</feature>
<feature type="binding site" evidence="1">
    <location>
        <position position="229"/>
    </location>
    <ligand>
        <name>NAD(+)</name>
        <dbReference type="ChEBI" id="CHEBI:57540"/>
    </ligand>
</feature>
<feature type="binding site" evidence="1">
    <location>
        <begin position="293"/>
        <end position="295"/>
    </location>
    <ligand>
        <name>NAD(+)</name>
        <dbReference type="ChEBI" id="CHEBI:57540"/>
    </ligand>
</feature>
<feature type="binding site" evidence="1">
    <location>
        <position position="370"/>
    </location>
    <ligand>
        <name>NAD(+)</name>
        <dbReference type="ChEBI" id="CHEBI:57540"/>
    </ligand>
</feature>
<feature type="modified residue" description="N-acetylserine" evidence="2">
    <location>
        <position position="2"/>
    </location>
</feature>
<feature type="modified residue" description="Phosphoserine" evidence="2">
    <location>
        <position position="23"/>
    </location>
</feature>
<feature type="modified residue" description="Phosphotyrosine" evidence="2">
    <location>
        <position position="35"/>
    </location>
</feature>
<keyword id="KW-0007">Acetylation</keyword>
<keyword id="KW-0963">Cytoplasm</keyword>
<keyword id="KW-0443">Lipid metabolism</keyword>
<keyword id="KW-0479">Metal-binding</keyword>
<keyword id="KW-0520">NAD</keyword>
<keyword id="KW-0560">Oxidoreductase</keyword>
<keyword id="KW-0597">Phosphoprotein</keyword>
<keyword id="KW-0862">Zinc</keyword>
<gene>
    <name evidence="2" type="primary">ADH1B</name>
</gene>
<name>ADH1B_PAPHA</name>
<evidence type="ECO:0000250" key="1"/>
<evidence type="ECO:0000250" key="2">
    <source>
        <dbReference type="UniProtKB" id="P00325"/>
    </source>
</evidence>
<evidence type="ECO:0000305" key="3"/>
<reference key="1">
    <citation type="journal article" date="1989" name="Proc. Natl. Acad. Sci. U.S.A.">
        <title>Cloning and sequencing of cDNA encoding baboon liver alcohol dehydrogenase: evidence for a common ancestral lineage with the human alcohol dehydrogenase beta subunit and for class I ADH gene duplications predating primate radiation.</title>
        <authorList>
            <person name="Trezise A.E.O."/>
            <person name="Godfrey E.A."/>
            <person name="Holmes R.S."/>
            <person name="Beacham I.R."/>
        </authorList>
    </citation>
    <scope>NUCLEOTIDE SEQUENCE [MRNA]</scope>
    <source>
        <tissue>Liver</tissue>
    </source>
</reference>
<accession>P14139</accession>
<sequence length="375" mass="39846">MSTAGKVIKCKAAVLWEVKKPFSIEDVEVAPPKAYEVRIKMVAVGICRTDDHVVSGNLVSPLPAILGHEAAGIVESVGEGVTTVKPGDKVIPLFTPQCGKCRVCKSPEGNYCVKNDLSNPRGTLQDGTRRFTCRGKPIHHFVGTSTFSQYTVVDENAVAKIDAASPLEKVCLIGCGFSTGYGSAVNVAKVTPGSVCAVFGLGGVGLSAVMGCKAAGAARIIAVDINKDKFAKAKELGATECINPQDYKKPIQEVLKEMTDGGVDFSFEVIGRLDTMMASLLCCHEACGTSVIVGVPPDSQNLSINPMLLLTGRTWKGAVYGGFKSREGIPKLVADFMAKKFSLDALITHVLPFEKINEGFDLLRSGKSIRTVLTF</sequence>
<organism>
    <name type="scientific">Papio hamadryas</name>
    <name type="common">Hamadryas baboon</name>
    <dbReference type="NCBI Taxonomy" id="9557"/>
    <lineage>
        <taxon>Eukaryota</taxon>
        <taxon>Metazoa</taxon>
        <taxon>Chordata</taxon>
        <taxon>Craniata</taxon>
        <taxon>Vertebrata</taxon>
        <taxon>Euteleostomi</taxon>
        <taxon>Mammalia</taxon>
        <taxon>Eutheria</taxon>
        <taxon>Euarchontoglires</taxon>
        <taxon>Primates</taxon>
        <taxon>Haplorrhini</taxon>
        <taxon>Catarrhini</taxon>
        <taxon>Cercopithecidae</taxon>
        <taxon>Cercopithecinae</taxon>
        <taxon>Papio</taxon>
    </lineage>
</organism>
<dbReference type="EC" id="1.1.1.105" evidence="2"/>
<dbReference type="EMBL" id="M25035">
    <property type="protein sequence ID" value="AAA35378.1"/>
    <property type="molecule type" value="mRNA"/>
</dbReference>
<dbReference type="SMR" id="P14139"/>
<dbReference type="GO" id="GO:0005829">
    <property type="term" value="C:cytosol"/>
    <property type="evidence" value="ECO:0007669"/>
    <property type="project" value="TreeGrafter"/>
</dbReference>
<dbReference type="GO" id="GO:0004745">
    <property type="term" value="F:all-trans-retinol dehydrogenase (NAD+) activity"/>
    <property type="evidence" value="ECO:0000250"/>
    <property type="project" value="UniProtKB"/>
</dbReference>
<dbReference type="GO" id="GO:0008270">
    <property type="term" value="F:zinc ion binding"/>
    <property type="evidence" value="ECO:0007669"/>
    <property type="project" value="InterPro"/>
</dbReference>
<dbReference type="GO" id="GO:0042573">
    <property type="term" value="P:retinoic acid metabolic process"/>
    <property type="evidence" value="ECO:0007669"/>
    <property type="project" value="TreeGrafter"/>
</dbReference>
<dbReference type="GO" id="GO:0001523">
    <property type="term" value="P:retinoid metabolic process"/>
    <property type="evidence" value="ECO:0000250"/>
    <property type="project" value="UniProtKB"/>
</dbReference>
<dbReference type="GO" id="GO:0042572">
    <property type="term" value="P:retinol metabolic process"/>
    <property type="evidence" value="ECO:0007669"/>
    <property type="project" value="TreeGrafter"/>
</dbReference>
<dbReference type="CDD" id="cd08299">
    <property type="entry name" value="alcohol_DH_class_I_II_IV"/>
    <property type="match status" value="1"/>
</dbReference>
<dbReference type="FunFam" id="3.40.50.720:FF:000003">
    <property type="entry name" value="S-(hydroxymethyl)glutathione dehydrogenase"/>
    <property type="match status" value="1"/>
</dbReference>
<dbReference type="FunFam" id="3.90.180.10:FF:000001">
    <property type="entry name" value="S-(hydroxymethyl)glutathione dehydrogenase"/>
    <property type="match status" value="1"/>
</dbReference>
<dbReference type="Gene3D" id="3.90.180.10">
    <property type="entry name" value="Medium-chain alcohol dehydrogenases, catalytic domain"/>
    <property type="match status" value="1"/>
</dbReference>
<dbReference type="Gene3D" id="3.40.50.720">
    <property type="entry name" value="NAD(P)-binding Rossmann-like Domain"/>
    <property type="match status" value="1"/>
</dbReference>
<dbReference type="InterPro" id="IPR013149">
    <property type="entry name" value="ADH-like_C"/>
</dbReference>
<dbReference type="InterPro" id="IPR013154">
    <property type="entry name" value="ADH-like_N"/>
</dbReference>
<dbReference type="InterPro" id="IPR002328">
    <property type="entry name" value="ADH_Zn_CS"/>
</dbReference>
<dbReference type="InterPro" id="IPR011032">
    <property type="entry name" value="GroES-like_sf"/>
</dbReference>
<dbReference type="InterPro" id="IPR036291">
    <property type="entry name" value="NAD(P)-bd_dom_sf"/>
</dbReference>
<dbReference type="InterPro" id="IPR020843">
    <property type="entry name" value="PKS_ER"/>
</dbReference>
<dbReference type="PANTHER" id="PTHR43880">
    <property type="entry name" value="ALCOHOL DEHYDROGENASE"/>
    <property type="match status" value="1"/>
</dbReference>
<dbReference type="PANTHER" id="PTHR43880:SF11">
    <property type="entry name" value="ALL-TRANS-RETINOL DEHYDROGENASE [NAD(+)] ADH1B"/>
    <property type="match status" value="1"/>
</dbReference>
<dbReference type="Pfam" id="PF08240">
    <property type="entry name" value="ADH_N"/>
    <property type="match status" value="1"/>
</dbReference>
<dbReference type="Pfam" id="PF00107">
    <property type="entry name" value="ADH_zinc_N"/>
    <property type="match status" value="1"/>
</dbReference>
<dbReference type="SMART" id="SM00829">
    <property type="entry name" value="PKS_ER"/>
    <property type="match status" value="1"/>
</dbReference>
<dbReference type="SUPFAM" id="SSF50129">
    <property type="entry name" value="GroES-like"/>
    <property type="match status" value="2"/>
</dbReference>
<dbReference type="SUPFAM" id="SSF51735">
    <property type="entry name" value="NAD(P)-binding Rossmann-fold domains"/>
    <property type="match status" value="1"/>
</dbReference>
<dbReference type="PROSITE" id="PS00059">
    <property type="entry name" value="ADH_ZINC"/>
    <property type="match status" value="1"/>
</dbReference>
<comment type="function">
    <text evidence="2">Catalyzes the NAD-dependent oxidation of all-trans-retinol and its derivatives such as all-trans-4-hydroxyretinol and may participate in retinoid metabolism. In vitro can also catalyze the NADH-dependent reduction of all-trans-retinal and its derivatives such as all-trans-4-oxoretinal. Catalyzes in the oxidative direction with higher efficiency. Has the same affinity for all-trans-4-hydroxyretinol and all-trans-4-oxoretinal.</text>
</comment>
<comment type="catalytic activity">
    <reaction evidence="2">
        <text>all-trans-retinol + NAD(+) = all-trans-retinal + NADH + H(+)</text>
        <dbReference type="Rhea" id="RHEA:21284"/>
        <dbReference type="ChEBI" id="CHEBI:15378"/>
        <dbReference type="ChEBI" id="CHEBI:17336"/>
        <dbReference type="ChEBI" id="CHEBI:17898"/>
        <dbReference type="ChEBI" id="CHEBI:57540"/>
        <dbReference type="ChEBI" id="CHEBI:57945"/>
        <dbReference type="EC" id="1.1.1.105"/>
    </reaction>
    <physiologicalReaction direction="left-to-right" evidence="2">
        <dbReference type="Rhea" id="RHEA:21285"/>
    </physiologicalReaction>
</comment>
<comment type="catalytic activity">
    <reaction evidence="2">
        <text>all-trans-4-hydroxyretinol + NAD(+) = all-trans-4-hydroxyretinal + NADH + H(+)</text>
        <dbReference type="Rhea" id="RHEA:55936"/>
        <dbReference type="ChEBI" id="CHEBI:15378"/>
        <dbReference type="ChEBI" id="CHEBI:57540"/>
        <dbReference type="ChEBI" id="CHEBI:57945"/>
        <dbReference type="ChEBI" id="CHEBI:132259"/>
        <dbReference type="ChEBI" id="CHEBI:139346"/>
    </reaction>
    <physiologicalReaction direction="left-to-right" evidence="2">
        <dbReference type="Rhea" id="RHEA:55937"/>
    </physiologicalReaction>
</comment>
<comment type="catalytic activity">
    <reaction evidence="2">
        <text>all-trans-4-oxoretinol + NAD(+) = all-trans-4-oxoretinal + NADH + H(+)</text>
        <dbReference type="Rhea" id="RHEA:60632"/>
        <dbReference type="ChEBI" id="CHEBI:15378"/>
        <dbReference type="ChEBI" id="CHEBI:44597"/>
        <dbReference type="ChEBI" id="CHEBI:57540"/>
        <dbReference type="ChEBI" id="CHEBI:57945"/>
        <dbReference type="ChEBI" id="CHEBI:139347"/>
    </reaction>
</comment>
<comment type="cofactor">
    <cofactor>
        <name>Zn(2+)</name>
        <dbReference type="ChEBI" id="CHEBI:29105"/>
    </cofactor>
    <text>Binds 2 Zn(2+) ions per subunit.</text>
</comment>
<comment type="subunit">
    <text evidence="1">Homodimer or heterodimer of closely related subunits.</text>
</comment>
<comment type="subcellular location">
    <subcellularLocation>
        <location>Cytoplasm</location>
    </subcellularLocation>
</comment>
<comment type="tissue specificity">
    <text>Expressed in liver.</text>
</comment>
<comment type="similarity">
    <text evidence="3">Belongs to the zinc-containing alcohol dehydrogenase family.</text>
</comment>
<proteinExistence type="evidence at transcript level"/>